<gene>
    <name evidence="1" type="primary">fusA</name>
    <name type="ordered locus">A1I_01480</name>
</gene>
<sequence>MSKKLENIRNIGICAHIDAGKTTTTERILYYTGKSHKIGEVHEGGATMDWMEQEQERGITITSAATTCRWQDKQINIIDTPGHVDFTIEVERSLRVLDGAVAVFDGVAGVEPQSETVWRQADKYNVPRMCFVNKMDRMGADFYRCVDMIKDRLGAKPLVIQLPIGIEENFKGVVDLVKMQAVVWKDESLGAEYSYQEIPDDMKAKAEEYRANLLDMVVELDDKIMEKYLSGEEVTEEEIKKLIRKGTISAAFYPVLCGSAFKNKGVQPLLDAVVDYLPSPIDIATVKGVEVSTGEEKDFPISVSEPFSALAFKIMNDPFVGSLTFIRVYSGKITSGTTVINTVKNKREKIGRMLLMHANNREDVKEASAGDIVALAGLKDTTTGDTLSDEDKKVILERMEFPEPVIELAVEPKSKVDQEKMGLALSRLAAEDPSFRTSTDQETGQTVIKGMGELHLEIIIDRMRREFKVEANIGAPQVAYRETITKACEIDYTHKKQSGGAGQFARVKIIFEPLKDVKDLKEEDKNKSFIFESKIVGGAVPKEYIPGVEKGLNNIRETGVIAGYPMIDFKATLIDGAFHDVDSSVLAFEIAAKAAFREGMPKGNPKLLEPIMKVEVITPDEYMGDVIGDLNSRRGQVQGMEPRGNAQVIKAYVPLAEMFGYVNTLRSLSQGRAQYSMVFNHYDQVPTQVADTIKAKK</sequence>
<comment type="function">
    <text evidence="1">Catalyzes the GTP-dependent ribosomal translocation step during translation elongation. During this step, the ribosome changes from the pre-translocational (PRE) to the post-translocational (POST) state as the newly formed A-site-bound peptidyl-tRNA and P-site-bound deacylated tRNA move to the P and E sites, respectively. Catalyzes the coordinated movement of the two tRNA molecules, the mRNA and conformational changes in the ribosome.</text>
</comment>
<comment type="subcellular location">
    <subcellularLocation>
        <location evidence="1">Cytoplasm</location>
    </subcellularLocation>
</comment>
<comment type="similarity">
    <text evidence="1">Belongs to the TRAFAC class translation factor GTPase superfamily. Classic translation factor GTPase family. EF-G/EF-2 subfamily.</text>
</comment>
<evidence type="ECO:0000255" key="1">
    <source>
        <dbReference type="HAMAP-Rule" id="MF_00054"/>
    </source>
</evidence>
<dbReference type="EMBL" id="CP000849">
    <property type="protein sequence ID" value="ABV78688.1"/>
    <property type="molecule type" value="Genomic_DNA"/>
</dbReference>
<dbReference type="RefSeq" id="WP_012151622.1">
    <property type="nucleotide sequence ID" value="NC_009883.1"/>
</dbReference>
<dbReference type="SMR" id="A8GV17"/>
<dbReference type="KEGG" id="rbo:A1I_01480"/>
<dbReference type="HOGENOM" id="CLU_002794_4_1_5"/>
<dbReference type="GO" id="GO:0005737">
    <property type="term" value="C:cytoplasm"/>
    <property type="evidence" value="ECO:0007669"/>
    <property type="project" value="UniProtKB-SubCell"/>
</dbReference>
<dbReference type="GO" id="GO:0005525">
    <property type="term" value="F:GTP binding"/>
    <property type="evidence" value="ECO:0007669"/>
    <property type="project" value="UniProtKB-UniRule"/>
</dbReference>
<dbReference type="GO" id="GO:0003924">
    <property type="term" value="F:GTPase activity"/>
    <property type="evidence" value="ECO:0007669"/>
    <property type="project" value="InterPro"/>
</dbReference>
<dbReference type="GO" id="GO:0003746">
    <property type="term" value="F:translation elongation factor activity"/>
    <property type="evidence" value="ECO:0007669"/>
    <property type="project" value="UniProtKB-UniRule"/>
</dbReference>
<dbReference type="GO" id="GO:0032790">
    <property type="term" value="P:ribosome disassembly"/>
    <property type="evidence" value="ECO:0007669"/>
    <property type="project" value="TreeGrafter"/>
</dbReference>
<dbReference type="CDD" id="cd01886">
    <property type="entry name" value="EF-G"/>
    <property type="match status" value="1"/>
</dbReference>
<dbReference type="CDD" id="cd16262">
    <property type="entry name" value="EFG_III"/>
    <property type="match status" value="1"/>
</dbReference>
<dbReference type="CDD" id="cd01434">
    <property type="entry name" value="EFG_mtEFG1_IV"/>
    <property type="match status" value="1"/>
</dbReference>
<dbReference type="CDD" id="cd03713">
    <property type="entry name" value="EFG_mtEFG_C"/>
    <property type="match status" value="1"/>
</dbReference>
<dbReference type="CDD" id="cd04088">
    <property type="entry name" value="EFG_mtEFG_II"/>
    <property type="match status" value="1"/>
</dbReference>
<dbReference type="FunFam" id="2.40.30.10:FF:000006">
    <property type="entry name" value="Elongation factor G"/>
    <property type="match status" value="1"/>
</dbReference>
<dbReference type="FunFam" id="3.30.230.10:FF:000003">
    <property type="entry name" value="Elongation factor G"/>
    <property type="match status" value="1"/>
</dbReference>
<dbReference type="FunFam" id="3.30.70.240:FF:000001">
    <property type="entry name" value="Elongation factor G"/>
    <property type="match status" value="1"/>
</dbReference>
<dbReference type="FunFam" id="3.30.70.870:FF:000001">
    <property type="entry name" value="Elongation factor G"/>
    <property type="match status" value="1"/>
</dbReference>
<dbReference type="FunFam" id="3.40.50.300:FF:000029">
    <property type="entry name" value="Elongation factor G"/>
    <property type="match status" value="1"/>
</dbReference>
<dbReference type="Gene3D" id="3.30.230.10">
    <property type="match status" value="1"/>
</dbReference>
<dbReference type="Gene3D" id="3.30.70.240">
    <property type="match status" value="1"/>
</dbReference>
<dbReference type="Gene3D" id="3.30.70.870">
    <property type="entry name" value="Elongation Factor G (Translational Gtpase), domain 3"/>
    <property type="match status" value="1"/>
</dbReference>
<dbReference type="Gene3D" id="3.40.50.300">
    <property type="entry name" value="P-loop containing nucleotide triphosphate hydrolases"/>
    <property type="match status" value="1"/>
</dbReference>
<dbReference type="Gene3D" id="2.40.30.10">
    <property type="entry name" value="Translation factors"/>
    <property type="match status" value="1"/>
</dbReference>
<dbReference type="HAMAP" id="MF_00054_B">
    <property type="entry name" value="EF_G_EF_2_B"/>
    <property type="match status" value="1"/>
</dbReference>
<dbReference type="InterPro" id="IPR053905">
    <property type="entry name" value="EF-G-like_DII"/>
</dbReference>
<dbReference type="InterPro" id="IPR041095">
    <property type="entry name" value="EFG_II"/>
</dbReference>
<dbReference type="InterPro" id="IPR009022">
    <property type="entry name" value="EFG_III"/>
</dbReference>
<dbReference type="InterPro" id="IPR035647">
    <property type="entry name" value="EFG_III/V"/>
</dbReference>
<dbReference type="InterPro" id="IPR047872">
    <property type="entry name" value="EFG_IV"/>
</dbReference>
<dbReference type="InterPro" id="IPR035649">
    <property type="entry name" value="EFG_V"/>
</dbReference>
<dbReference type="InterPro" id="IPR000640">
    <property type="entry name" value="EFG_V-like"/>
</dbReference>
<dbReference type="InterPro" id="IPR031157">
    <property type="entry name" value="G_TR_CS"/>
</dbReference>
<dbReference type="InterPro" id="IPR027417">
    <property type="entry name" value="P-loop_NTPase"/>
</dbReference>
<dbReference type="InterPro" id="IPR020568">
    <property type="entry name" value="Ribosomal_Su5_D2-typ_SF"/>
</dbReference>
<dbReference type="InterPro" id="IPR014721">
    <property type="entry name" value="Ribsml_uS5_D2-typ_fold_subgr"/>
</dbReference>
<dbReference type="InterPro" id="IPR005225">
    <property type="entry name" value="Small_GTP-bd"/>
</dbReference>
<dbReference type="InterPro" id="IPR000795">
    <property type="entry name" value="T_Tr_GTP-bd_dom"/>
</dbReference>
<dbReference type="InterPro" id="IPR009000">
    <property type="entry name" value="Transl_B-barrel_sf"/>
</dbReference>
<dbReference type="InterPro" id="IPR004540">
    <property type="entry name" value="Transl_elong_EFG/EF2"/>
</dbReference>
<dbReference type="InterPro" id="IPR005517">
    <property type="entry name" value="Transl_elong_EFG/EF2_IV"/>
</dbReference>
<dbReference type="NCBIfam" id="TIGR00484">
    <property type="entry name" value="EF-G"/>
    <property type="match status" value="1"/>
</dbReference>
<dbReference type="NCBIfam" id="NF009381">
    <property type="entry name" value="PRK12740.1-5"/>
    <property type="match status" value="1"/>
</dbReference>
<dbReference type="NCBIfam" id="TIGR00231">
    <property type="entry name" value="small_GTP"/>
    <property type="match status" value="1"/>
</dbReference>
<dbReference type="PANTHER" id="PTHR43261:SF1">
    <property type="entry name" value="RIBOSOME-RELEASING FACTOR 2, MITOCHONDRIAL"/>
    <property type="match status" value="1"/>
</dbReference>
<dbReference type="PANTHER" id="PTHR43261">
    <property type="entry name" value="TRANSLATION ELONGATION FACTOR G-RELATED"/>
    <property type="match status" value="1"/>
</dbReference>
<dbReference type="Pfam" id="PF22042">
    <property type="entry name" value="EF-G_D2"/>
    <property type="match status" value="1"/>
</dbReference>
<dbReference type="Pfam" id="PF00679">
    <property type="entry name" value="EFG_C"/>
    <property type="match status" value="1"/>
</dbReference>
<dbReference type="Pfam" id="PF14492">
    <property type="entry name" value="EFG_III"/>
    <property type="match status" value="1"/>
</dbReference>
<dbReference type="Pfam" id="PF03764">
    <property type="entry name" value="EFG_IV"/>
    <property type="match status" value="1"/>
</dbReference>
<dbReference type="Pfam" id="PF00009">
    <property type="entry name" value="GTP_EFTU"/>
    <property type="match status" value="1"/>
</dbReference>
<dbReference type="PRINTS" id="PR00315">
    <property type="entry name" value="ELONGATNFCT"/>
</dbReference>
<dbReference type="SMART" id="SM00838">
    <property type="entry name" value="EFG_C"/>
    <property type="match status" value="1"/>
</dbReference>
<dbReference type="SMART" id="SM00889">
    <property type="entry name" value="EFG_IV"/>
    <property type="match status" value="1"/>
</dbReference>
<dbReference type="SUPFAM" id="SSF54980">
    <property type="entry name" value="EF-G C-terminal domain-like"/>
    <property type="match status" value="2"/>
</dbReference>
<dbReference type="SUPFAM" id="SSF52540">
    <property type="entry name" value="P-loop containing nucleoside triphosphate hydrolases"/>
    <property type="match status" value="1"/>
</dbReference>
<dbReference type="SUPFAM" id="SSF54211">
    <property type="entry name" value="Ribosomal protein S5 domain 2-like"/>
    <property type="match status" value="1"/>
</dbReference>
<dbReference type="SUPFAM" id="SSF50447">
    <property type="entry name" value="Translation proteins"/>
    <property type="match status" value="1"/>
</dbReference>
<dbReference type="PROSITE" id="PS00301">
    <property type="entry name" value="G_TR_1"/>
    <property type="match status" value="1"/>
</dbReference>
<dbReference type="PROSITE" id="PS51722">
    <property type="entry name" value="G_TR_2"/>
    <property type="match status" value="1"/>
</dbReference>
<feature type="chain" id="PRO_1000008875" description="Elongation factor G">
    <location>
        <begin position="1"/>
        <end position="697"/>
    </location>
</feature>
<feature type="domain" description="tr-type G">
    <location>
        <begin position="6"/>
        <end position="281"/>
    </location>
</feature>
<feature type="binding site" evidence="1">
    <location>
        <begin position="15"/>
        <end position="22"/>
    </location>
    <ligand>
        <name>GTP</name>
        <dbReference type="ChEBI" id="CHEBI:37565"/>
    </ligand>
</feature>
<feature type="binding site" evidence="1">
    <location>
        <begin position="79"/>
        <end position="83"/>
    </location>
    <ligand>
        <name>GTP</name>
        <dbReference type="ChEBI" id="CHEBI:37565"/>
    </ligand>
</feature>
<feature type="binding site" evidence="1">
    <location>
        <begin position="133"/>
        <end position="136"/>
    </location>
    <ligand>
        <name>GTP</name>
        <dbReference type="ChEBI" id="CHEBI:37565"/>
    </ligand>
</feature>
<keyword id="KW-0963">Cytoplasm</keyword>
<keyword id="KW-0251">Elongation factor</keyword>
<keyword id="KW-0342">GTP-binding</keyword>
<keyword id="KW-0547">Nucleotide-binding</keyword>
<keyword id="KW-0648">Protein biosynthesis</keyword>
<proteinExistence type="inferred from homology"/>
<name>EFG_RICB8</name>
<accession>A8GV17</accession>
<organism>
    <name type="scientific">Rickettsia bellii (strain OSU 85-389)</name>
    <dbReference type="NCBI Taxonomy" id="391896"/>
    <lineage>
        <taxon>Bacteria</taxon>
        <taxon>Pseudomonadati</taxon>
        <taxon>Pseudomonadota</taxon>
        <taxon>Alphaproteobacteria</taxon>
        <taxon>Rickettsiales</taxon>
        <taxon>Rickettsiaceae</taxon>
        <taxon>Rickettsieae</taxon>
        <taxon>Rickettsia</taxon>
        <taxon>belli group</taxon>
    </lineage>
</organism>
<protein>
    <recommendedName>
        <fullName evidence="1">Elongation factor G</fullName>
        <shortName evidence="1">EF-G</shortName>
    </recommendedName>
</protein>
<reference key="1">
    <citation type="submission" date="2007-09" db="EMBL/GenBank/DDBJ databases">
        <title>Complete genome sequencing of Rickettsia bellii.</title>
        <authorList>
            <person name="Madan A."/>
            <person name="Lee H."/>
            <person name="Madan A."/>
            <person name="Yoon J.-G."/>
            <person name="Ryu G.-Y."/>
            <person name="Dasch G."/>
            <person name="Ereemeva M."/>
        </authorList>
    </citation>
    <scope>NUCLEOTIDE SEQUENCE [LARGE SCALE GENOMIC DNA]</scope>
    <source>
        <strain>OSU 85-389</strain>
    </source>
</reference>